<protein>
    <recommendedName>
        <fullName evidence="1">PhoP/PhoQ regulator MgrB</fullName>
    </recommendedName>
</protein>
<organism>
    <name type="scientific">Klebsiella pneumoniae (strain 342)</name>
    <dbReference type="NCBI Taxonomy" id="507522"/>
    <lineage>
        <taxon>Bacteria</taxon>
        <taxon>Pseudomonadati</taxon>
        <taxon>Pseudomonadota</taxon>
        <taxon>Gammaproteobacteria</taxon>
        <taxon>Enterobacterales</taxon>
        <taxon>Enterobacteriaceae</taxon>
        <taxon>Klebsiella/Raoultella group</taxon>
        <taxon>Klebsiella</taxon>
        <taxon>Klebsiella pneumoniae complex</taxon>
    </lineage>
</organism>
<evidence type="ECO:0000255" key="1">
    <source>
        <dbReference type="HAMAP-Rule" id="MF_01596"/>
    </source>
</evidence>
<keyword id="KW-0997">Cell inner membrane</keyword>
<keyword id="KW-1003">Cell membrane</keyword>
<keyword id="KW-0472">Membrane</keyword>
<keyword id="KW-0812">Transmembrane</keyword>
<keyword id="KW-1133">Transmembrane helix</keyword>
<name>MGRB_KLEP3</name>
<feature type="chain" id="PRO_1000201570" description="PhoP/PhoQ regulator MgrB">
    <location>
        <begin position="1"/>
        <end position="47"/>
    </location>
</feature>
<feature type="transmembrane region" description="Helical" evidence="1">
    <location>
        <begin position="6"/>
        <end position="26"/>
    </location>
</feature>
<gene>
    <name evidence="1" type="primary">mgrB</name>
    <name type="ordered locus">KPK_1949</name>
</gene>
<comment type="function">
    <text evidence="1">PhoP-regulated transcription is redox-sensitive, being activated when the periplasm becomes more reducing. MgrB acts between DsbA/DsbB and PhoP/PhoQ in this pathway. Represses PhoP/PhoQ signaling, possibly by binding to the periplasmic domain of PhoQ, altering its activity and that of downstream effector PhoP.</text>
</comment>
<comment type="subunit">
    <text evidence="1">May form homooligomers. Probably interacts with the periplasmic domain of PhoQ.</text>
</comment>
<comment type="subcellular location">
    <subcellularLocation>
        <location evidence="1">Cell inner membrane</location>
        <topology evidence="1">Single-pass membrane protein</topology>
    </subcellularLocation>
</comment>
<comment type="similarity">
    <text evidence="1">Belongs to the MgrB family.</text>
</comment>
<sequence length="47" mass="5544">MKKLRWVLLIVIIAGCLLLWTQMLNVMCDQDVQFFSGICTINKFIPW</sequence>
<reference key="1">
    <citation type="journal article" date="2008" name="PLoS Genet.">
        <title>Complete genome sequence of the N2-fixing broad host range endophyte Klebsiella pneumoniae 342 and virulence predictions verified in mice.</title>
        <authorList>
            <person name="Fouts D.E."/>
            <person name="Tyler H.L."/>
            <person name="DeBoy R.T."/>
            <person name="Daugherty S."/>
            <person name="Ren Q."/>
            <person name="Badger J.H."/>
            <person name="Durkin A.S."/>
            <person name="Huot H."/>
            <person name="Shrivastava S."/>
            <person name="Kothari S."/>
            <person name="Dodson R.J."/>
            <person name="Mohamoud Y."/>
            <person name="Khouri H."/>
            <person name="Roesch L.F.W."/>
            <person name="Krogfelt K.A."/>
            <person name="Struve C."/>
            <person name="Triplett E.W."/>
            <person name="Methe B.A."/>
        </authorList>
    </citation>
    <scope>NUCLEOTIDE SEQUENCE [LARGE SCALE GENOMIC DNA]</scope>
    <source>
        <strain>342</strain>
    </source>
</reference>
<dbReference type="EMBL" id="CP000964">
    <property type="protein sequence ID" value="ACI07312.1"/>
    <property type="molecule type" value="Genomic_DNA"/>
</dbReference>
<dbReference type="KEGG" id="kpe:KPK_1949"/>
<dbReference type="HOGENOM" id="CLU_208030_1_0_6"/>
<dbReference type="Proteomes" id="UP000001734">
    <property type="component" value="Chromosome"/>
</dbReference>
<dbReference type="GO" id="GO:0005886">
    <property type="term" value="C:plasma membrane"/>
    <property type="evidence" value="ECO:0007669"/>
    <property type="project" value="UniProtKB-SubCell"/>
</dbReference>
<dbReference type="GO" id="GO:0070298">
    <property type="term" value="P:negative regulation of phosphorelay signal transduction system"/>
    <property type="evidence" value="ECO:0007669"/>
    <property type="project" value="UniProtKB-UniRule"/>
</dbReference>
<dbReference type="HAMAP" id="MF_01596">
    <property type="entry name" value="MgrB"/>
    <property type="match status" value="1"/>
</dbReference>
<dbReference type="InterPro" id="IPR020907">
    <property type="entry name" value="MgrB"/>
</dbReference>
<dbReference type="NCBIfam" id="NF007635">
    <property type="entry name" value="PRK10299.1"/>
    <property type="match status" value="1"/>
</dbReference>
<dbReference type="Pfam" id="PF13998">
    <property type="entry name" value="MgrB"/>
    <property type="match status" value="1"/>
</dbReference>
<dbReference type="PROSITE" id="PS51257">
    <property type="entry name" value="PROKAR_LIPOPROTEIN"/>
    <property type="match status" value="1"/>
</dbReference>
<proteinExistence type="inferred from homology"/>
<accession>B5XQ45</accession>